<organism>
    <name type="scientific">Cupriavidus metallidurans (strain ATCC 43123 / DSM 2839 / NBRC 102507 / CH34)</name>
    <name type="common">Ralstonia metallidurans</name>
    <dbReference type="NCBI Taxonomy" id="266264"/>
    <lineage>
        <taxon>Bacteria</taxon>
        <taxon>Pseudomonadati</taxon>
        <taxon>Pseudomonadota</taxon>
        <taxon>Betaproteobacteria</taxon>
        <taxon>Burkholderiales</taxon>
        <taxon>Burkholderiaceae</taxon>
        <taxon>Cupriavidus</taxon>
    </lineage>
</organism>
<comment type="function">
    <text evidence="1">NAD-binding protein involved in the addition of a carboxymethylaminomethyl (cmnm) group at the wobble position (U34) of certain tRNAs, forming tRNA-cmnm(5)s(2)U34.</text>
</comment>
<comment type="cofactor">
    <cofactor evidence="1">
        <name>FAD</name>
        <dbReference type="ChEBI" id="CHEBI:57692"/>
    </cofactor>
</comment>
<comment type="subunit">
    <text evidence="1">Homodimer. Heterotetramer of two MnmE and two MnmG subunits.</text>
</comment>
<comment type="subcellular location">
    <subcellularLocation>
        <location evidence="1">Cytoplasm</location>
    </subcellularLocation>
</comment>
<comment type="similarity">
    <text evidence="1">Belongs to the MnmG family.</text>
</comment>
<feature type="chain" id="PRO_1000016656" description="tRNA uridine 5-carboxymethylaminomethyl modification enzyme MnmG">
    <location>
        <begin position="1"/>
        <end position="654"/>
    </location>
</feature>
<feature type="binding site" evidence="1">
    <location>
        <begin position="13"/>
        <end position="18"/>
    </location>
    <ligand>
        <name>FAD</name>
        <dbReference type="ChEBI" id="CHEBI:57692"/>
    </ligand>
</feature>
<feature type="binding site" evidence="1">
    <location>
        <begin position="274"/>
        <end position="288"/>
    </location>
    <ligand>
        <name>NAD(+)</name>
        <dbReference type="ChEBI" id="CHEBI:57540"/>
    </ligand>
</feature>
<evidence type="ECO:0000255" key="1">
    <source>
        <dbReference type="HAMAP-Rule" id="MF_00129"/>
    </source>
</evidence>
<gene>
    <name evidence="1" type="primary">mnmG</name>
    <name evidence="1" type="synonym">gidA</name>
    <name type="ordered locus">Rmet_3506</name>
</gene>
<reference key="1">
    <citation type="journal article" date="2010" name="PLoS ONE">
        <title>The complete genome sequence of Cupriavidus metallidurans strain CH34, a master survivalist in harsh and anthropogenic environments.</title>
        <authorList>
            <person name="Janssen P.J."/>
            <person name="Van Houdt R."/>
            <person name="Moors H."/>
            <person name="Monsieurs P."/>
            <person name="Morin N."/>
            <person name="Michaux A."/>
            <person name="Benotmane M.A."/>
            <person name="Leys N."/>
            <person name="Vallaeys T."/>
            <person name="Lapidus A."/>
            <person name="Monchy S."/>
            <person name="Medigue C."/>
            <person name="Taghavi S."/>
            <person name="McCorkle S."/>
            <person name="Dunn J."/>
            <person name="van der Lelie D."/>
            <person name="Mergeay M."/>
        </authorList>
    </citation>
    <scope>NUCLEOTIDE SEQUENCE [LARGE SCALE GENOMIC DNA]</scope>
    <source>
        <strain>ATCC 43123 / DSM 2839 / NBRC 102507 / CH34</strain>
    </source>
</reference>
<accession>Q1LHJ8</accession>
<sequence>MLYPKEFDVIVVGGGHAGTEAALAAARMGCQTLLLSHNIETLGQMSCNPSIGGIGKGHLVKEVDAMGGAMAAATDEAGIQFRILNSSKGPAVRATRAQADRVLYRKAIRTRLENQPNLMLFQQAVDDLMVEGDRVVGARTQVGIDFRARAVVLTAGTFLDGKIHVGLDNYTGGRAGDPAAVSLSARLKELKLPQGRLKTGTPPRIDGRTIDFSVMEEQPGDLDPVPVFSFLGRPEQHPQQLPCWITHTNSRTHDVIRGGLDRSPMYTGVIEGVGPRYCPSIEDKIHRFASKESHQIFLEPEGLTTNEFYPNGISTSLPFDVQLELVHSIRGLENAHILRPGYAIEYDYFDPRGLKSSLESKAIEGLFFAGQINGTTGYEEAAAQGLLAGINAGCYVRERDAWTPRRDQAYLGVLVDDLITRGVTEPYRMFTSRAEFRLSLREDNADMRLTEIGRELGVVDDVRWDAFNRKRDAVSRETERLKSTWVNPTLLPEADAVPLLGKGIEREYSLADLLRRPEVRYEALVALQDGRFAPETPLADDTMLAEQIREQIEIGIKYHGYIARQAAEVDKLEANESTKLPPNFDYTEVRGLGFEVSQKLNQHRPETLGQASRISGVTPAAISLLLVHLKKKGMGRAAAQTSATPVAGNGQEAA</sequence>
<keyword id="KW-0963">Cytoplasm</keyword>
<keyword id="KW-0274">FAD</keyword>
<keyword id="KW-0285">Flavoprotein</keyword>
<keyword id="KW-0520">NAD</keyword>
<keyword id="KW-1185">Reference proteome</keyword>
<keyword id="KW-0819">tRNA processing</keyword>
<name>MNMG_CUPMC</name>
<proteinExistence type="inferred from homology"/>
<protein>
    <recommendedName>
        <fullName evidence="1">tRNA uridine 5-carboxymethylaminomethyl modification enzyme MnmG</fullName>
    </recommendedName>
    <alternativeName>
        <fullName evidence="1">Glucose-inhibited division protein A</fullName>
    </alternativeName>
</protein>
<dbReference type="EMBL" id="CP000352">
    <property type="protein sequence ID" value="ABF10378.1"/>
    <property type="molecule type" value="Genomic_DNA"/>
</dbReference>
<dbReference type="RefSeq" id="WP_011517930.1">
    <property type="nucleotide sequence ID" value="NC_007973.1"/>
</dbReference>
<dbReference type="SMR" id="Q1LHJ8"/>
<dbReference type="STRING" id="266264.Rmet_3506"/>
<dbReference type="KEGG" id="rme:Rmet_3506"/>
<dbReference type="eggNOG" id="COG0445">
    <property type="taxonomic scope" value="Bacteria"/>
</dbReference>
<dbReference type="HOGENOM" id="CLU_007831_2_2_4"/>
<dbReference type="Proteomes" id="UP000002429">
    <property type="component" value="Chromosome"/>
</dbReference>
<dbReference type="GO" id="GO:0005829">
    <property type="term" value="C:cytosol"/>
    <property type="evidence" value="ECO:0007669"/>
    <property type="project" value="TreeGrafter"/>
</dbReference>
<dbReference type="GO" id="GO:0050660">
    <property type="term" value="F:flavin adenine dinucleotide binding"/>
    <property type="evidence" value="ECO:0007669"/>
    <property type="project" value="UniProtKB-UniRule"/>
</dbReference>
<dbReference type="GO" id="GO:0030488">
    <property type="term" value="P:tRNA methylation"/>
    <property type="evidence" value="ECO:0007669"/>
    <property type="project" value="TreeGrafter"/>
</dbReference>
<dbReference type="GO" id="GO:0002098">
    <property type="term" value="P:tRNA wobble uridine modification"/>
    <property type="evidence" value="ECO:0007669"/>
    <property type="project" value="InterPro"/>
</dbReference>
<dbReference type="FunFam" id="1.10.10.1800:FF:000001">
    <property type="entry name" value="tRNA uridine 5-carboxymethylaminomethyl modification enzyme MnmG"/>
    <property type="match status" value="1"/>
</dbReference>
<dbReference type="FunFam" id="1.10.150.570:FF:000001">
    <property type="entry name" value="tRNA uridine 5-carboxymethylaminomethyl modification enzyme MnmG"/>
    <property type="match status" value="1"/>
</dbReference>
<dbReference type="FunFam" id="3.50.50.60:FF:000002">
    <property type="entry name" value="tRNA uridine 5-carboxymethylaminomethyl modification enzyme MnmG"/>
    <property type="match status" value="1"/>
</dbReference>
<dbReference type="FunFam" id="3.50.50.60:FF:000010">
    <property type="entry name" value="tRNA uridine 5-carboxymethylaminomethyl modification enzyme MnmG"/>
    <property type="match status" value="1"/>
</dbReference>
<dbReference type="Gene3D" id="3.50.50.60">
    <property type="entry name" value="FAD/NAD(P)-binding domain"/>
    <property type="match status" value="2"/>
</dbReference>
<dbReference type="Gene3D" id="1.10.150.570">
    <property type="entry name" value="GidA associated domain, C-terminal subdomain"/>
    <property type="match status" value="1"/>
</dbReference>
<dbReference type="Gene3D" id="1.10.10.1800">
    <property type="entry name" value="tRNA uridine 5-carboxymethylaminomethyl modification enzyme MnmG/GidA"/>
    <property type="match status" value="1"/>
</dbReference>
<dbReference type="HAMAP" id="MF_00129">
    <property type="entry name" value="MnmG_GidA"/>
    <property type="match status" value="1"/>
</dbReference>
<dbReference type="InterPro" id="IPR036188">
    <property type="entry name" value="FAD/NAD-bd_sf"/>
</dbReference>
<dbReference type="InterPro" id="IPR049312">
    <property type="entry name" value="GIDA_C_N"/>
</dbReference>
<dbReference type="InterPro" id="IPR004416">
    <property type="entry name" value="MnmG"/>
</dbReference>
<dbReference type="InterPro" id="IPR002218">
    <property type="entry name" value="MnmG-rel"/>
</dbReference>
<dbReference type="InterPro" id="IPR020595">
    <property type="entry name" value="MnmG-rel_CS"/>
</dbReference>
<dbReference type="InterPro" id="IPR026904">
    <property type="entry name" value="MnmG_C"/>
</dbReference>
<dbReference type="InterPro" id="IPR047001">
    <property type="entry name" value="MnmG_C_subdom"/>
</dbReference>
<dbReference type="InterPro" id="IPR044920">
    <property type="entry name" value="MnmG_C_subdom_sf"/>
</dbReference>
<dbReference type="InterPro" id="IPR040131">
    <property type="entry name" value="MnmG_N"/>
</dbReference>
<dbReference type="NCBIfam" id="TIGR00136">
    <property type="entry name" value="mnmG_gidA"/>
    <property type="match status" value="1"/>
</dbReference>
<dbReference type="PANTHER" id="PTHR11806">
    <property type="entry name" value="GLUCOSE INHIBITED DIVISION PROTEIN A"/>
    <property type="match status" value="1"/>
</dbReference>
<dbReference type="PANTHER" id="PTHR11806:SF0">
    <property type="entry name" value="PROTEIN MTO1 HOMOLOG, MITOCHONDRIAL"/>
    <property type="match status" value="1"/>
</dbReference>
<dbReference type="Pfam" id="PF01134">
    <property type="entry name" value="GIDA"/>
    <property type="match status" value="1"/>
</dbReference>
<dbReference type="Pfam" id="PF21680">
    <property type="entry name" value="GIDA_C_1st"/>
    <property type="match status" value="1"/>
</dbReference>
<dbReference type="Pfam" id="PF13932">
    <property type="entry name" value="SAM_GIDA_C"/>
    <property type="match status" value="1"/>
</dbReference>
<dbReference type="SMART" id="SM01228">
    <property type="entry name" value="GIDA_assoc_3"/>
    <property type="match status" value="1"/>
</dbReference>
<dbReference type="SUPFAM" id="SSF51905">
    <property type="entry name" value="FAD/NAD(P)-binding domain"/>
    <property type="match status" value="1"/>
</dbReference>
<dbReference type="PROSITE" id="PS01280">
    <property type="entry name" value="GIDA_1"/>
    <property type="match status" value="1"/>
</dbReference>
<dbReference type="PROSITE" id="PS01281">
    <property type="entry name" value="GIDA_2"/>
    <property type="match status" value="1"/>
</dbReference>